<accession>O30646</accession>
<gene>
    <name type="primary">pagO</name>
    <name type="ordered locus">STM1862</name>
</gene>
<keyword id="KW-1003">Cell membrane</keyword>
<keyword id="KW-0472">Membrane</keyword>
<keyword id="KW-1185">Reference proteome</keyword>
<keyword id="KW-0677">Repeat</keyword>
<keyword id="KW-0812">Transmembrane</keyword>
<keyword id="KW-1133">Transmembrane helix</keyword>
<reference key="1">
    <citation type="journal article" date="1998" name="Microb. Pathog.">
        <title>Identification of PhoP-PhoQ activated genes within a duplicated region of the Salmonella typhimurium chromosome.</title>
        <authorList>
            <person name="Gunn J.S."/>
            <person name="Belden W.J."/>
            <person name="Miller S.I."/>
        </authorList>
    </citation>
    <scope>NUCLEOTIDE SEQUENCE [GENOMIC DNA]</scope>
    <source>
        <strain>ATCC 14028s / SGSG 2262</strain>
    </source>
</reference>
<reference key="2">
    <citation type="journal article" date="2001" name="Nature">
        <title>Complete genome sequence of Salmonella enterica serovar Typhimurium LT2.</title>
        <authorList>
            <person name="McClelland M."/>
            <person name="Sanderson K.E."/>
            <person name="Spieth J."/>
            <person name="Clifton S.W."/>
            <person name="Latreille P."/>
            <person name="Courtney L."/>
            <person name="Porwollik S."/>
            <person name="Ali J."/>
            <person name="Dante M."/>
            <person name="Du F."/>
            <person name="Hou S."/>
            <person name="Layman D."/>
            <person name="Leonard S."/>
            <person name="Nguyen C."/>
            <person name="Scott K."/>
            <person name="Holmes A."/>
            <person name="Grewal N."/>
            <person name="Mulvaney E."/>
            <person name="Ryan E."/>
            <person name="Sun H."/>
            <person name="Florea L."/>
            <person name="Miller W."/>
            <person name="Stoneking T."/>
            <person name="Nhan M."/>
            <person name="Waterston R."/>
            <person name="Wilson R.K."/>
        </authorList>
    </citation>
    <scope>NUCLEOTIDE SEQUENCE [LARGE SCALE GENOMIC DNA]</scope>
    <source>
        <strain>LT2 / SGSC1412 / ATCC 700720</strain>
    </source>
</reference>
<evidence type="ECO:0000255" key="1"/>
<evidence type="ECO:0000305" key="2"/>
<comment type="subcellular location">
    <subcellularLocation>
        <location evidence="2">Cell membrane</location>
        <topology evidence="2">Multi-pass membrane protein</topology>
    </subcellularLocation>
</comment>
<comment type="similarity">
    <text evidence="2">Belongs to the EamA transporter family.</text>
</comment>
<organism>
    <name type="scientific">Salmonella typhimurium (strain LT2 / SGSC1412 / ATCC 700720)</name>
    <dbReference type="NCBI Taxonomy" id="99287"/>
    <lineage>
        <taxon>Bacteria</taxon>
        <taxon>Pseudomonadati</taxon>
        <taxon>Pseudomonadota</taxon>
        <taxon>Gammaproteobacteria</taxon>
        <taxon>Enterobacterales</taxon>
        <taxon>Enterobacteriaceae</taxon>
        <taxon>Salmonella</taxon>
    </lineage>
</organism>
<feature type="chain" id="PRO_0000108150" description="Protein PagO">
    <location>
        <begin position="1"/>
        <end position="304"/>
    </location>
</feature>
<feature type="transmembrane region" description="Helical" evidence="1">
    <location>
        <begin position="4"/>
        <end position="24"/>
    </location>
</feature>
<feature type="transmembrane region" description="Helical" evidence="1">
    <location>
        <begin position="34"/>
        <end position="54"/>
    </location>
</feature>
<feature type="transmembrane region" description="Helical" evidence="1">
    <location>
        <begin position="67"/>
        <end position="87"/>
    </location>
</feature>
<feature type="transmembrane region" description="Helical" evidence="1">
    <location>
        <begin position="95"/>
        <end position="115"/>
    </location>
</feature>
<feature type="transmembrane region" description="Helical" evidence="1">
    <location>
        <begin position="119"/>
        <end position="139"/>
    </location>
</feature>
<feature type="transmembrane region" description="Helical" evidence="1">
    <location>
        <begin position="150"/>
        <end position="170"/>
    </location>
</feature>
<feature type="transmembrane region" description="Helical" evidence="1">
    <location>
        <begin position="180"/>
        <end position="200"/>
    </location>
</feature>
<feature type="transmembrane region" description="Helical" evidence="1">
    <location>
        <begin position="214"/>
        <end position="234"/>
    </location>
</feature>
<feature type="transmembrane region" description="Helical" evidence="1">
    <location>
        <begin position="246"/>
        <end position="266"/>
    </location>
</feature>
<feature type="transmembrane region" description="Helical" evidence="1">
    <location>
        <begin position="267"/>
        <end position="287"/>
    </location>
</feature>
<feature type="domain" description="EamA 1">
    <location>
        <begin position="15"/>
        <end position="139"/>
    </location>
</feature>
<feature type="domain" description="EamA 2">
    <location>
        <begin position="161"/>
        <end position="287"/>
    </location>
</feature>
<name>PAGO_SALTY</name>
<protein>
    <recommendedName>
        <fullName>Protein PagO</fullName>
    </recommendedName>
</protein>
<sequence length="304" mass="33622">MRKVSISILFMLVSLTWGTTWLAMRIAVETIPPVFATGMRFMFAAPFLIIIAWLRKKTLLFPPGQRLFQFVICIFYFCIPFSLMIYGETYVNSGLAAIIFANMPVAVLIASVLFLNEKAKLMQIAGLTIAITALTGILLEETNTSTESHWQGITALISAVLIHAIIYTQCKKRSCTVSVITFNALPCLLAGLILSATGWFFERPQVSTFSVHSILATLYLGAFAGVFGILCYFALQQKANAFQASLVFLIFPLIAVSLEDYIYGYAISTHSMLLIIPLVIGIFLTLVARNLPVTSRCRDNSSQK</sequence>
<dbReference type="EMBL" id="AF013775">
    <property type="protein sequence ID" value="AAB82452.1"/>
    <property type="molecule type" value="Genomic_DNA"/>
</dbReference>
<dbReference type="EMBL" id="AE006468">
    <property type="protein sequence ID" value="AAL20777.1"/>
    <property type="molecule type" value="Genomic_DNA"/>
</dbReference>
<dbReference type="RefSeq" id="NP_460818.1">
    <property type="nucleotide sequence ID" value="NC_003197.2"/>
</dbReference>
<dbReference type="RefSeq" id="WP_001233446.1">
    <property type="nucleotide sequence ID" value="NC_003197.2"/>
</dbReference>
<dbReference type="SMR" id="O30646"/>
<dbReference type="STRING" id="99287.STM1862"/>
<dbReference type="TCDB" id="2.A.7.3.25">
    <property type="family name" value="the drug/metabolite transporter (dmt) superfamily"/>
</dbReference>
<dbReference type="PaxDb" id="99287-STM1862"/>
<dbReference type="GeneID" id="1253381"/>
<dbReference type="KEGG" id="stm:STM1862"/>
<dbReference type="PATRIC" id="fig|99287.12.peg.1972"/>
<dbReference type="HOGENOM" id="CLU_033863_5_3_6"/>
<dbReference type="OMA" id="PFTASIC"/>
<dbReference type="PhylomeDB" id="O30646"/>
<dbReference type="BioCyc" id="SENT99287:STM1862-MONOMER"/>
<dbReference type="Proteomes" id="UP000001014">
    <property type="component" value="Chromosome"/>
</dbReference>
<dbReference type="GO" id="GO:0005886">
    <property type="term" value="C:plasma membrane"/>
    <property type="evidence" value="ECO:0007669"/>
    <property type="project" value="UniProtKB-SubCell"/>
</dbReference>
<dbReference type="InterPro" id="IPR050638">
    <property type="entry name" value="AA-Vitamin_Transporters"/>
</dbReference>
<dbReference type="InterPro" id="IPR000620">
    <property type="entry name" value="EamA_dom"/>
</dbReference>
<dbReference type="PANTHER" id="PTHR32322">
    <property type="entry name" value="INNER MEMBRANE TRANSPORTER"/>
    <property type="match status" value="1"/>
</dbReference>
<dbReference type="PANTHER" id="PTHR32322:SF14">
    <property type="entry name" value="PROTEIN PAGO"/>
    <property type="match status" value="1"/>
</dbReference>
<dbReference type="Pfam" id="PF00892">
    <property type="entry name" value="EamA"/>
    <property type="match status" value="2"/>
</dbReference>
<dbReference type="SUPFAM" id="SSF103481">
    <property type="entry name" value="Multidrug resistance efflux transporter EmrE"/>
    <property type="match status" value="2"/>
</dbReference>
<proteinExistence type="inferred from homology"/>